<gene>
    <name evidence="1" type="primary">petC</name>
    <name type="ordered locus">syc0318_d</name>
</gene>
<name>UCRI_SYNP6</name>
<organism>
    <name type="scientific">Synechococcus sp. (strain ATCC 27144 / PCC 6301 / SAUG 1402/1)</name>
    <name type="common">Anacystis nidulans</name>
    <dbReference type="NCBI Taxonomy" id="269084"/>
    <lineage>
        <taxon>Bacteria</taxon>
        <taxon>Bacillati</taxon>
        <taxon>Cyanobacteriota</taxon>
        <taxon>Cyanophyceae</taxon>
        <taxon>Synechococcales</taxon>
        <taxon>Synechococcaceae</taxon>
        <taxon>Synechococcus</taxon>
    </lineage>
</organism>
<comment type="function">
    <text evidence="1">Component of the cytochrome b6-f complex, which mediates electron transfer between photosystem II (PSII) and photosystem I (PSI), cyclic electron flow around PSI, and state transitions.</text>
</comment>
<comment type="catalytic activity">
    <reaction evidence="1">
        <text>2 oxidized [plastocyanin] + a plastoquinol + 2 H(+)(in) = 2 reduced [plastocyanin] + a plastoquinone + 4 H(+)(out)</text>
        <dbReference type="Rhea" id="RHEA:22148"/>
        <dbReference type="Rhea" id="RHEA-COMP:9561"/>
        <dbReference type="Rhea" id="RHEA-COMP:9562"/>
        <dbReference type="Rhea" id="RHEA-COMP:10039"/>
        <dbReference type="Rhea" id="RHEA-COMP:10040"/>
        <dbReference type="ChEBI" id="CHEBI:15378"/>
        <dbReference type="ChEBI" id="CHEBI:17757"/>
        <dbReference type="ChEBI" id="CHEBI:29036"/>
        <dbReference type="ChEBI" id="CHEBI:49552"/>
        <dbReference type="ChEBI" id="CHEBI:62192"/>
        <dbReference type="EC" id="7.1.1.6"/>
    </reaction>
</comment>
<comment type="cofactor">
    <cofactor evidence="1">
        <name>[2Fe-2S] cluster</name>
        <dbReference type="ChEBI" id="CHEBI:190135"/>
    </cofactor>
    <text evidence="1">Binds 1 [2Fe-2S] cluster per subunit.</text>
</comment>
<comment type="subunit">
    <text evidence="1">The 4 large subunits of the cytochrome b6-f complex are cytochrome b6, subunit IV (17 kDa polypeptide, PetD), cytochrome f and the Rieske protein, while the 4 small subunits are PetG, PetL, PetM and PetN. The complex functions as a dimer.</text>
</comment>
<comment type="subcellular location">
    <subcellularLocation>
        <location evidence="1">Cellular thylakoid membrane</location>
        <topology evidence="1">Single-pass membrane protein</topology>
    </subcellularLocation>
    <text evidence="1">The transmembrane helix obliquely spans the membrane in one monomer, and its extrinsic C-terminal domain is part of the other monomer.</text>
</comment>
<comment type="miscellaneous">
    <text>The Rieske iron-sulfur protein is a high potential 2Fe-2S protein.</text>
</comment>
<comment type="similarity">
    <text evidence="1">Belongs to the Rieske iron-sulfur protein family.</text>
</comment>
<dbReference type="EC" id="7.1.1.6" evidence="1"/>
<dbReference type="EMBL" id="AP008231">
    <property type="protein sequence ID" value="BAD78508.1"/>
    <property type="molecule type" value="Genomic_DNA"/>
</dbReference>
<dbReference type="RefSeq" id="WP_011242632.1">
    <property type="nucleotide sequence ID" value="NZ_CP085785.1"/>
</dbReference>
<dbReference type="SMR" id="Q5N5B0"/>
<dbReference type="KEGG" id="syc:syc0318_d"/>
<dbReference type="eggNOG" id="COG0723">
    <property type="taxonomic scope" value="Bacteria"/>
</dbReference>
<dbReference type="Proteomes" id="UP000001175">
    <property type="component" value="Chromosome"/>
</dbReference>
<dbReference type="GO" id="GO:0031676">
    <property type="term" value="C:plasma membrane-derived thylakoid membrane"/>
    <property type="evidence" value="ECO:0007669"/>
    <property type="project" value="UniProtKB-SubCell"/>
</dbReference>
<dbReference type="GO" id="GO:0051537">
    <property type="term" value="F:2 iron, 2 sulfur cluster binding"/>
    <property type="evidence" value="ECO:0007669"/>
    <property type="project" value="UniProtKB-KW"/>
</dbReference>
<dbReference type="GO" id="GO:0045158">
    <property type="term" value="F:electron transporter, transferring electrons within cytochrome b6/f complex of photosystem II activity"/>
    <property type="evidence" value="ECO:0007669"/>
    <property type="project" value="UniProtKB-UniRule"/>
</dbReference>
<dbReference type="GO" id="GO:0046872">
    <property type="term" value="F:metal ion binding"/>
    <property type="evidence" value="ECO:0007669"/>
    <property type="project" value="UniProtKB-KW"/>
</dbReference>
<dbReference type="GO" id="GO:0004497">
    <property type="term" value="F:monooxygenase activity"/>
    <property type="evidence" value="ECO:0007669"/>
    <property type="project" value="UniProtKB-ARBA"/>
</dbReference>
<dbReference type="GO" id="GO:0016705">
    <property type="term" value="F:oxidoreductase activity, acting on paired donors, with incorporation or reduction of molecular oxygen"/>
    <property type="evidence" value="ECO:0007669"/>
    <property type="project" value="UniProtKB-ARBA"/>
</dbReference>
<dbReference type="GO" id="GO:0009496">
    <property type="term" value="F:plastoquinol--plastocyanin reductase activity"/>
    <property type="evidence" value="ECO:0007669"/>
    <property type="project" value="UniProtKB-UniRule"/>
</dbReference>
<dbReference type="GO" id="GO:0015979">
    <property type="term" value="P:photosynthesis"/>
    <property type="evidence" value="ECO:0007669"/>
    <property type="project" value="UniProtKB-UniRule"/>
</dbReference>
<dbReference type="CDD" id="cd03471">
    <property type="entry name" value="Rieske_cytochrome_b6f"/>
    <property type="match status" value="1"/>
</dbReference>
<dbReference type="FunFam" id="2.102.10.10:FF:000007">
    <property type="entry name" value="Cytochrome b6-f complex iron-sulfur subunit"/>
    <property type="match status" value="1"/>
</dbReference>
<dbReference type="Gene3D" id="2.102.10.10">
    <property type="entry name" value="Rieske [2Fe-2S] iron-sulphur domain"/>
    <property type="match status" value="1"/>
</dbReference>
<dbReference type="Gene3D" id="1.20.5.700">
    <property type="entry name" value="Single helix bin"/>
    <property type="match status" value="1"/>
</dbReference>
<dbReference type="HAMAP" id="MF_01335">
    <property type="entry name" value="Cytb6_f_Rieske"/>
    <property type="match status" value="1"/>
</dbReference>
<dbReference type="InterPro" id="IPR023960">
    <property type="entry name" value="Cyt_b6_f_Rieske"/>
</dbReference>
<dbReference type="InterPro" id="IPR017941">
    <property type="entry name" value="Rieske_2Fe-2S"/>
</dbReference>
<dbReference type="InterPro" id="IPR036922">
    <property type="entry name" value="Rieske_2Fe-2S_sf"/>
</dbReference>
<dbReference type="InterPro" id="IPR014349">
    <property type="entry name" value="Rieske_Fe-S_prot"/>
</dbReference>
<dbReference type="InterPro" id="IPR005805">
    <property type="entry name" value="Rieske_Fe-S_prot_C"/>
</dbReference>
<dbReference type="NCBIfam" id="NF045928">
    <property type="entry name" value="Cytb6fFeSPetC"/>
    <property type="match status" value="1"/>
</dbReference>
<dbReference type="NCBIfam" id="NF010001">
    <property type="entry name" value="PRK13474.1"/>
    <property type="match status" value="1"/>
</dbReference>
<dbReference type="PANTHER" id="PTHR10134">
    <property type="entry name" value="CYTOCHROME B-C1 COMPLEX SUBUNIT RIESKE, MITOCHONDRIAL"/>
    <property type="match status" value="1"/>
</dbReference>
<dbReference type="Pfam" id="PF00355">
    <property type="entry name" value="Rieske"/>
    <property type="match status" value="1"/>
</dbReference>
<dbReference type="Pfam" id="PF25471">
    <property type="entry name" value="TM_PetC"/>
    <property type="match status" value="1"/>
</dbReference>
<dbReference type="PRINTS" id="PR00162">
    <property type="entry name" value="RIESKE"/>
</dbReference>
<dbReference type="SUPFAM" id="SSF50022">
    <property type="entry name" value="ISP domain"/>
    <property type="match status" value="1"/>
</dbReference>
<dbReference type="PROSITE" id="PS51296">
    <property type="entry name" value="RIESKE"/>
    <property type="match status" value="1"/>
</dbReference>
<keyword id="KW-0001">2Fe-2S</keyword>
<keyword id="KW-1015">Disulfide bond</keyword>
<keyword id="KW-0249">Electron transport</keyword>
<keyword id="KW-0408">Iron</keyword>
<keyword id="KW-0411">Iron-sulfur</keyword>
<keyword id="KW-0472">Membrane</keyword>
<keyword id="KW-0479">Metal-binding</keyword>
<keyword id="KW-0793">Thylakoid</keyword>
<keyword id="KW-1278">Translocase</keyword>
<keyword id="KW-0812">Transmembrane</keyword>
<keyword id="KW-1133">Transmembrane helix</keyword>
<keyword id="KW-0813">Transport</keyword>
<feature type="chain" id="PRO_0000127782" description="Cytochrome b6-f complex iron-sulfur subunit">
    <location>
        <begin position="1"/>
        <end position="179"/>
    </location>
</feature>
<feature type="transmembrane region" description="Helical" evidence="1">
    <location>
        <begin position="21"/>
        <end position="43"/>
    </location>
</feature>
<feature type="domain" description="Rieske" evidence="1">
    <location>
        <begin position="61"/>
        <end position="162"/>
    </location>
</feature>
<feature type="binding site" evidence="1">
    <location>
        <position position="108"/>
    </location>
    <ligand>
        <name>[2Fe-2S] cluster</name>
        <dbReference type="ChEBI" id="CHEBI:190135"/>
    </ligand>
</feature>
<feature type="binding site" evidence="1">
    <location>
        <position position="110"/>
    </location>
    <ligand>
        <name>[2Fe-2S] cluster</name>
        <dbReference type="ChEBI" id="CHEBI:190135"/>
    </ligand>
</feature>
<feature type="binding site" evidence="1">
    <location>
        <position position="126"/>
    </location>
    <ligand>
        <name>[2Fe-2S] cluster</name>
        <dbReference type="ChEBI" id="CHEBI:190135"/>
    </ligand>
</feature>
<feature type="binding site" evidence="1">
    <location>
        <position position="129"/>
    </location>
    <ligand>
        <name>[2Fe-2S] cluster</name>
        <dbReference type="ChEBI" id="CHEBI:190135"/>
    </ligand>
</feature>
<feature type="disulfide bond" evidence="1">
    <location>
        <begin position="113"/>
        <end position="128"/>
    </location>
</feature>
<accession>Q5N5B0</accession>
<evidence type="ECO:0000255" key="1">
    <source>
        <dbReference type="HAMAP-Rule" id="MF_01335"/>
    </source>
</evidence>
<reference key="1">
    <citation type="journal article" date="2007" name="Photosyn. Res.">
        <title>Complete nucleotide sequence of the freshwater unicellular cyanobacterium Synechococcus elongatus PCC 6301 chromosome: gene content and organization.</title>
        <authorList>
            <person name="Sugita C."/>
            <person name="Ogata K."/>
            <person name="Shikata M."/>
            <person name="Jikuya H."/>
            <person name="Takano J."/>
            <person name="Furumichi M."/>
            <person name="Kanehisa M."/>
            <person name="Omata T."/>
            <person name="Sugiura M."/>
            <person name="Sugita M."/>
        </authorList>
    </citation>
    <scope>NUCLEOTIDE SEQUENCE [LARGE SCALE GENOMIC DNA]</scope>
    <source>
        <strain>ATCC 27144 / PCC 6301 / SAUG 1402/1</strain>
    </source>
</reference>
<protein>
    <recommendedName>
        <fullName evidence="1">Cytochrome b6-f complex iron-sulfur subunit</fullName>
        <ecNumber evidence="1">7.1.1.6</ecNumber>
    </recommendedName>
    <alternativeName>
        <fullName evidence="1">Plastohydroquinone:plastocyanin oxidoreductase iron-sulfur protein</fullName>
        <shortName evidence="1">ISP</shortName>
        <shortName evidence="1">RISP</shortName>
    </alternativeName>
    <alternativeName>
        <fullName evidence="1">Rieske iron-sulfur protein</fullName>
    </alternativeName>
</protein>
<proteinExistence type="inferred from homology"/>
<sequence>MTQVSGASDVPSMGRRQFMNLLTFGSVTGVALGALYPVVNYFIPPSSGGSGGGVAAKDALGNDVVLSKFLADHNVGDRTLVQGLKGDPTYLVVESSEAIGDYGINAVCTHLGCVVPWNASENKFKCPCHGSQYDATGKVVRGPAPLSLALAHVSVTDDKVFLSPWTETDFRTGDNPWWA</sequence>